<gene>
    <name type="primary">VPS2.3</name>
    <name type="synonym">CHMP2-3</name>
    <name type="ordered locus">At1g03950</name>
    <name type="ORF">F21M11.12</name>
</gene>
<organism>
    <name type="scientific">Arabidopsis thaliana</name>
    <name type="common">Mouse-ear cress</name>
    <dbReference type="NCBI Taxonomy" id="3702"/>
    <lineage>
        <taxon>Eukaryota</taxon>
        <taxon>Viridiplantae</taxon>
        <taxon>Streptophyta</taxon>
        <taxon>Embryophyta</taxon>
        <taxon>Tracheophyta</taxon>
        <taxon>Spermatophyta</taxon>
        <taxon>Magnoliopsida</taxon>
        <taxon>eudicotyledons</taxon>
        <taxon>Gunneridae</taxon>
        <taxon>Pentapetalae</taxon>
        <taxon>rosids</taxon>
        <taxon>malvids</taxon>
        <taxon>Brassicales</taxon>
        <taxon>Brassicaceae</taxon>
        <taxon>Camelineae</taxon>
        <taxon>Arabidopsis</taxon>
    </lineage>
</organism>
<keyword id="KW-0175">Coiled coil</keyword>
<keyword id="KW-0967">Endosome</keyword>
<keyword id="KW-0653">Protein transport</keyword>
<keyword id="KW-1185">Reference proteome</keyword>
<keyword id="KW-0813">Transport</keyword>
<sequence>MNIFTKKPNPREVLRESKREMTQATRGIEKEIGSLQSEEKKLVLEIKRTAKSGNEGATKILARQLIRLRQQIANLQGSRAQMRGIATHTQAMHAHTSVAAGMQGATKAMAAMSKNMDPAKQAKVMREFQKQSAQMDMTTEMMSDSIDDALDNDEAEDETEDLTNQVLDEIGIDIASQLSSAPKGKIGGKKAEDVGSSGIDELEKRLAALR</sequence>
<accession>Q941D5</accession>
<accession>Q9ZWB5</accession>
<name>VPS2C_ARATH</name>
<feature type="chain" id="PRO_0000368197" description="Vacuolar protein sorting-associated protein 2 homolog 3">
    <location>
        <begin position="1"/>
        <end position="210"/>
    </location>
</feature>
<feature type="region of interest" description="Disordered" evidence="3">
    <location>
        <begin position="1"/>
        <end position="23"/>
    </location>
</feature>
<feature type="region of interest" description="Disordered" evidence="3">
    <location>
        <begin position="178"/>
        <end position="200"/>
    </location>
</feature>
<feature type="coiled-coil region" evidence="2">
    <location>
        <begin position="28"/>
        <end position="84"/>
    </location>
</feature>
<feature type="compositionally biased region" description="Basic and acidic residues" evidence="3">
    <location>
        <begin position="9"/>
        <end position="23"/>
    </location>
</feature>
<reference key="1">
    <citation type="journal article" date="2000" name="Nature">
        <title>Sequence and analysis of chromosome 1 of the plant Arabidopsis thaliana.</title>
        <authorList>
            <person name="Theologis A."/>
            <person name="Ecker J.R."/>
            <person name="Palm C.J."/>
            <person name="Federspiel N.A."/>
            <person name="Kaul S."/>
            <person name="White O."/>
            <person name="Alonso J."/>
            <person name="Altafi H."/>
            <person name="Araujo R."/>
            <person name="Bowman C.L."/>
            <person name="Brooks S.Y."/>
            <person name="Buehler E."/>
            <person name="Chan A."/>
            <person name="Chao Q."/>
            <person name="Chen H."/>
            <person name="Cheuk R.F."/>
            <person name="Chin C.W."/>
            <person name="Chung M.K."/>
            <person name="Conn L."/>
            <person name="Conway A.B."/>
            <person name="Conway A.R."/>
            <person name="Creasy T.H."/>
            <person name="Dewar K."/>
            <person name="Dunn P."/>
            <person name="Etgu P."/>
            <person name="Feldblyum T.V."/>
            <person name="Feng J.-D."/>
            <person name="Fong B."/>
            <person name="Fujii C.Y."/>
            <person name="Gill J.E."/>
            <person name="Goldsmith A.D."/>
            <person name="Haas B."/>
            <person name="Hansen N.F."/>
            <person name="Hughes B."/>
            <person name="Huizar L."/>
            <person name="Hunter J.L."/>
            <person name="Jenkins J."/>
            <person name="Johnson-Hopson C."/>
            <person name="Khan S."/>
            <person name="Khaykin E."/>
            <person name="Kim C.J."/>
            <person name="Koo H.L."/>
            <person name="Kremenetskaia I."/>
            <person name="Kurtz D.B."/>
            <person name="Kwan A."/>
            <person name="Lam B."/>
            <person name="Langin-Hooper S."/>
            <person name="Lee A."/>
            <person name="Lee J.M."/>
            <person name="Lenz C.A."/>
            <person name="Li J.H."/>
            <person name="Li Y.-P."/>
            <person name="Lin X."/>
            <person name="Liu S.X."/>
            <person name="Liu Z.A."/>
            <person name="Luros J.S."/>
            <person name="Maiti R."/>
            <person name="Marziali A."/>
            <person name="Militscher J."/>
            <person name="Miranda M."/>
            <person name="Nguyen M."/>
            <person name="Nierman W.C."/>
            <person name="Osborne B.I."/>
            <person name="Pai G."/>
            <person name="Peterson J."/>
            <person name="Pham P.K."/>
            <person name="Rizzo M."/>
            <person name="Rooney T."/>
            <person name="Rowley D."/>
            <person name="Sakano H."/>
            <person name="Salzberg S.L."/>
            <person name="Schwartz J.R."/>
            <person name="Shinn P."/>
            <person name="Southwick A.M."/>
            <person name="Sun H."/>
            <person name="Tallon L.J."/>
            <person name="Tambunga G."/>
            <person name="Toriumi M.J."/>
            <person name="Town C.D."/>
            <person name="Utterback T."/>
            <person name="Van Aken S."/>
            <person name="Vaysberg M."/>
            <person name="Vysotskaia V.S."/>
            <person name="Walker M."/>
            <person name="Wu D."/>
            <person name="Yu G."/>
            <person name="Fraser C.M."/>
            <person name="Venter J.C."/>
            <person name="Davis R.W."/>
        </authorList>
    </citation>
    <scope>NUCLEOTIDE SEQUENCE [LARGE SCALE GENOMIC DNA]</scope>
    <source>
        <strain>cv. Columbia</strain>
    </source>
</reference>
<reference key="2">
    <citation type="journal article" date="2017" name="Plant J.">
        <title>Araport11: a complete reannotation of the Arabidopsis thaliana reference genome.</title>
        <authorList>
            <person name="Cheng C.Y."/>
            <person name="Krishnakumar V."/>
            <person name="Chan A.P."/>
            <person name="Thibaud-Nissen F."/>
            <person name="Schobel S."/>
            <person name="Town C.D."/>
        </authorList>
    </citation>
    <scope>GENOME REANNOTATION</scope>
    <source>
        <strain>cv. Columbia</strain>
    </source>
</reference>
<reference key="3">
    <citation type="journal article" date="2003" name="Science">
        <title>Empirical analysis of transcriptional activity in the Arabidopsis genome.</title>
        <authorList>
            <person name="Yamada K."/>
            <person name="Lim J."/>
            <person name="Dale J.M."/>
            <person name="Chen H."/>
            <person name="Shinn P."/>
            <person name="Palm C.J."/>
            <person name="Southwick A.M."/>
            <person name="Wu H.C."/>
            <person name="Kim C.J."/>
            <person name="Nguyen M."/>
            <person name="Pham P.K."/>
            <person name="Cheuk R.F."/>
            <person name="Karlin-Newmann G."/>
            <person name="Liu S.X."/>
            <person name="Lam B."/>
            <person name="Sakano H."/>
            <person name="Wu T."/>
            <person name="Yu G."/>
            <person name="Miranda M."/>
            <person name="Quach H.L."/>
            <person name="Tripp M."/>
            <person name="Chang C.H."/>
            <person name="Lee J.M."/>
            <person name="Toriumi M.J."/>
            <person name="Chan M.M."/>
            <person name="Tang C.C."/>
            <person name="Onodera C.S."/>
            <person name="Deng J.M."/>
            <person name="Akiyama K."/>
            <person name="Ansari Y."/>
            <person name="Arakawa T."/>
            <person name="Banh J."/>
            <person name="Banno F."/>
            <person name="Bowser L."/>
            <person name="Brooks S.Y."/>
            <person name="Carninci P."/>
            <person name="Chao Q."/>
            <person name="Choy N."/>
            <person name="Enju A."/>
            <person name="Goldsmith A.D."/>
            <person name="Gurjal M."/>
            <person name="Hansen N.F."/>
            <person name="Hayashizaki Y."/>
            <person name="Johnson-Hopson C."/>
            <person name="Hsuan V.W."/>
            <person name="Iida K."/>
            <person name="Karnes M."/>
            <person name="Khan S."/>
            <person name="Koesema E."/>
            <person name="Ishida J."/>
            <person name="Jiang P.X."/>
            <person name="Jones T."/>
            <person name="Kawai J."/>
            <person name="Kamiya A."/>
            <person name="Meyers C."/>
            <person name="Nakajima M."/>
            <person name="Narusaka M."/>
            <person name="Seki M."/>
            <person name="Sakurai T."/>
            <person name="Satou M."/>
            <person name="Tamse R."/>
            <person name="Vaysberg M."/>
            <person name="Wallender E.K."/>
            <person name="Wong C."/>
            <person name="Yamamura Y."/>
            <person name="Yuan S."/>
            <person name="Shinozaki K."/>
            <person name="Davis R.W."/>
            <person name="Theologis A."/>
            <person name="Ecker J.R."/>
        </authorList>
    </citation>
    <scope>NUCLEOTIDE SEQUENCE [LARGE SCALE MRNA]</scope>
    <source>
        <strain>cv. Columbia</strain>
    </source>
</reference>
<reference key="4">
    <citation type="journal article" date="2006" name="Development">
        <title>The Arabidopsis elch mutant reveals functions of an ESCRT component in cytokinesis.</title>
        <authorList>
            <person name="Spitzer C."/>
            <person name="Schellmann S."/>
            <person name="Sabovljevic A."/>
            <person name="Shahriari M."/>
            <person name="Keshavaiah C."/>
            <person name="Bechtold N."/>
            <person name="Herzog M."/>
            <person name="Mueller S."/>
            <person name="Hanisch F.-G."/>
            <person name="Huelskamp M."/>
        </authorList>
    </citation>
    <scope>IDENTIFICATION</scope>
    <scope>NOMENCLATURE</scope>
</reference>
<reference key="5">
    <citation type="journal article" date="2006" name="Trends Plant Sci.">
        <title>Exploring the ESCRTing machinery in eukaryotes.</title>
        <authorList>
            <person name="Winter V."/>
            <person name="Hauser M.-T."/>
        </authorList>
    </citation>
    <scope>IDENTIFICATION</scope>
</reference>
<comment type="function">
    <text evidence="1">Component of the ESCRT-III complex, which is required for multivesicular bodies (MVBs) formation and sorting of endosomal cargo proteins into MVBs. The ESCRT-III complex is probably involved in the concentration of MVB cargo (By similarity).</text>
</comment>
<comment type="subunit">
    <text evidence="1">Component of the endosomal sorting required for transport complex III (ESCRT-III), composed at least of VPS2, VPS20, VPS24 and VPS32.</text>
</comment>
<comment type="subcellular location">
    <subcellularLocation>
        <location evidence="1">Endosome</location>
    </subcellularLocation>
</comment>
<comment type="similarity">
    <text evidence="4">Belongs to the SNF7 family.</text>
</comment>
<comment type="sequence caution" evidence="4">
    <conflict type="erroneous gene model prediction">
        <sequence resource="EMBL-CDS" id="AAD10675"/>
    </conflict>
</comment>
<proteinExistence type="evidence at transcript level"/>
<protein>
    <recommendedName>
        <fullName>Vacuolar protein sorting-associated protein 2 homolog 3</fullName>
        <shortName>AtVPS2-3</shortName>
    </recommendedName>
    <alternativeName>
        <fullName>Charged multivesicular body protein 2 homolog 3</fullName>
    </alternativeName>
    <alternativeName>
        <fullName>ESCRT-III complex subunit VPS2 homolog 3</fullName>
    </alternativeName>
</protein>
<dbReference type="EMBL" id="AC003027">
    <property type="protein sequence ID" value="AAD10675.1"/>
    <property type="status" value="ALT_SEQ"/>
    <property type="molecule type" value="Genomic_DNA"/>
</dbReference>
<dbReference type="EMBL" id="CP002684">
    <property type="protein sequence ID" value="AEE27637.1"/>
    <property type="molecule type" value="Genomic_DNA"/>
</dbReference>
<dbReference type="EMBL" id="AY052238">
    <property type="protein sequence ID" value="AAK97708.1"/>
    <property type="molecule type" value="mRNA"/>
</dbReference>
<dbReference type="EMBL" id="AY060501">
    <property type="protein sequence ID" value="AAL31114.1"/>
    <property type="molecule type" value="mRNA"/>
</dbReference>
<dbReference type="PIR" id="D86170">
    <property type="entry name" value="D86170"/>
</dbReference>
<dbReference type="RefSeq" id="NP_563696.1">
    <property type="nucleotide sequence ID" value="NM_100276.4"/>
</dbReference>
<dbReference type="SMR" id="Q941D5"/>
<dbReference type="BioGRID" id="24597">
    <property type="interactions" value="21"/>
</dbReference>
<dbReference type="FunCoup" id="Q941D5">
    <property type="interactions" value="2062"/>
</dbReference>
<dbReference type="IntAct" id="Q941D5">
    <property type="interactions" value="21"/>
</dbReference>
<dbReference type="STRING" id="3702.Q941D5"/>
<dbReference type="TCDB" id="3.A.31.1.2">
    <property type="family name" value="the endosomal sorting complexes required for transport iii (escrt-iii) family"/>
</dbReference>
<dbReference type="PaxDb" id="3702-AT1G03950.1"/>
<dbReference type="ProteomicsDB" id="242321"/>
<dbReference type="EnsemblPlants" id="AT1G03950.1">
    <property type="protein sequence ID" value="AT1G03950.1"/>
    <property type="gene ID" value="AT1G03950"/>
</dbReference>
<dbReference type="GeneID" id="839362"/>
<dbReference type="Gramene" id="AT1G03950.1">
    <property type="protein sequence ID" value="AT1G03950.1"/>
    <property type="gene ID" value="AT1G03950"/>
</dbReference>
<dbReference type="KEGG" id="ath:AT1G03950"/>
<dbReference type="Araport" id="AT1G03950"/>
<dbReference type="TAIR" id="AT1G03950">
    <property type="gene designation" value="VPS2.3"/>
</dbReference>
<dbReference type="eggNOG" id="KOG3230">
    <property type="taxonomic scope" value="Eukaryota"/>
</dbReference>
<dbReference type="HOGENOM" id="CLU_069208_1_1_1"/>
<dbReference type="InParanoid" id="Q941D5"/>
<dbReference type="OMA" id="MEMSEEM"/>
<dbReference type="OrthoDB" id="5594417at2759"/>
<dbReference type="PhylomeDB" id="Q941D5"/>
<dbReference type="PRO" id="PR:Q941D5"/>
<dbReference type="Proteomes" id="UP000006548">
    <property type="component" value="Chromosome 1"/>
</dbReference>
<dbReference type="ExpressionAtlas" id="Q941D5">
    <property type="expression patterns" value="baseline and differential"/>
</dbReference>
<dbReference type="GO" id="GO:0000815">
    <property type="term" value="C:ESCRT III complex"/>
    <property type="evidence" value="ECO:0000250"/>
    <property type="project" value="TAIR"/>
</dbReference>
<dbReference type="GO" id="GO:0015031">
    <property type="term" value="P:protein transport"/>
    <property type="evidence" value="ECO:0007669"/>
    <property type="project" value="UniProtKB-KW"/>
</dbReference>
<dbReference type="GO" id="GO:0007034">
    <property type="term" value="P:vacuolar transport"/>
    <property type="evidence" value="ECO:0007669"/>
    <property type="project" value="InterPro"/>
</dbReference>
<dbReference type="Gene3D" id="6.10.140.1230">
    <property type="match status" value="1"/>
</dbReference>
<dbReference type="InterPro" id="IPR005024">
    <property type="entry name" value="Snf7_fam"/>
</dbReference>
<dbReference type="PANTHER" id="PTHR10476">
    <property type="entry name" value="CHARGED MULTIVESICULAR BODY PROTEIN"/>
    <property type="match status" value="1"/>
</dbReference>
<dbReference type="Pfam" id="PF03357">
    <property type="entry name" value="Snf7"/>
    <property type="match status" value="1"/>
</dbReference>
<evidence type="ECO:0000250" key="1"/>
<evidence type="ECO:0000255" key="2"/>
<evidence type="ECO:0000256" key="3">
    <source>
        <dbReference type="SAM" id="MobiDB-lite"/>
    </source>
</evidence>
<evidence type="ECO:0000305" key="4"/>